<gene>
    <name evidence="1" type="primary">atpD</name>
    <name type="ordered locus">CLI_0211</name>
</gene>
<dbReference type="EC" id="7.1.2.2" evidence="1"/>
<dbReference type="EMBL" id="CP000728">
    <property type="protein sequence ID" value="ABS42137.1"/>
    <property type="molecule type" value="Genomic_DNA"/>
</dbReference>
<dbReference type="SMR" id="A7G9Q9"/>
<dbReference type="KEGG" id="cbf:CLI_0211"/>
<dbReference type="HOGENOM" id="CLU_022398_0_2_9"/>
<dbReference type="Proteomes" id="UP000002410">
    <property type="component" value="Chromosome"/>
</dbReference>
<dbReference type="GO" id="GO:0005886">
    <property type="term" value="C:plasma membrane"/>
    <property type="evidence" value="ECO:0007669"/>
    <property type="project" value="UniProtKB-SubCell"/>
</dbReference>
<dbReference type="GO" id="GO:0045259">
    <property type="term" value="C:proton-transporting ATP synthase complex"/>
    <property type="evidence" value="ECO:0007669"/>
    <property type="project" value="UniProtKB-KW"/>
</dbReference>
<dbReference type="GO" id="GO:0005524">
    <property type="term" value="F:ATP binding"/>
    <property type="evidence" value="ECO:0007669"/>
    <property type="project" value="UniProtKB-UniRule"/>
</dbReference>
<dbReference type="GO" id="GO:0016887">
    <property type="term" value="F:ATP hydrolysis activity"/>
    <property type="evidence" value="ECO:0007669"/>
    <property type="project" value="InterPro"/>
</dbReference>
<dbReference type="GO" id="GO:0046933">
    <property type="term" value="F:proton-transporting ATP synthase activity, rotational mechanism"/>
    <property type="evidence" value="ECO:0007669"/>
    <property type="project" value="UniProtKB-UniRule"/>
</dbReference>
<dbReference type="CDD" id="cd18110">
    <property type="entry name" value="ATP-synt_F1_beta_C"/>
    <property type="match status" value="1"/>
</dbReference>
<dbReference type="CDD" id="cd18115">
    <property type="entry name" value="ATP-synt_F1_beta_N"/>
    <property type="match status" value="1"/>
</dbReference>
<dbReference type="CDD" id="cd01133">
    <property type="entry name" value="F1-ATPase_beta_CD"/>
    <property type="match status" value="1"/>
</dbReference>
<dbReference type="FunFam" id="1.10.1140.10:FF:000001">
    <property type="entry name" value="ATP synthase subunit beta"/>
    <property type="match status" value="1"/>
</dbReference>
<dbReference type="FunFam" id="3.40.50.300:FF:000026">
    <property type="entry name" value="ATP synthase subunit beta"/>
    <property type="match status" value="1"/>
</dbReference>
<dbReference type="Gene3D" id="2.40.10.170">
    <property type="match status" value="1"/>
</dbReference>
<dbReference type="Gene3D" id="1.10.1140.10">
    <property type="entry name" value="Bovine Mitochondrial F1-atpase, Atp Synthase Beta Chain, Chain D, domain 3"/>
    <property type="match status" value="1"/>
</dbReference>
<dbReference type="Gene3D" id="3.40.50.300">
    <property type="entry name" value="P-loop containing nucleotide triphosphate hydrolases"/>
    <property type="match status" value="1"/>
</dbReference>
<dbReference type="HAMAP" id="MF_01347">
    <property type="entry name" value="ATP_synth_beta_bact"/>
    <property type="match status" value="1"/>
</dbReference>
<dbReference type="InterPro" id="IPR003593">
    <property type="entry name" value="AAA+_ATPase"/>
</dbReference>
<dbReference type="InterPro" id="IPR055190">
    <property type="entry name" value="ATP-synt_VA_C"/>
</dbReference>
<dbReference type="InterPro" id="IPR005722">
    <property type="entry name" value="ATP_synth_F1_bsu"/>
</dbReference>
<dbReference type="InterPro" id="IPR020003">
    <property type="entry name" value="ATPase_a/bsu_AS"/>
</dbReference>
<dbReference type="InterPro" id="IPR050053">
    <property type="entry name" value="ATPase_alpha/beta_chains"/>
</dbReference>
<dbReference type="InterPro" id="IPR004100">
    <property type="entry name" value="ATPase_F1/V1/A1_a/bsu_N"/>
</dbReference>
<dbReference type="InterPro" id="IPR036121">
    <property type="entry name" value="ATPase_F1/V1/A1_a/bsu_N_sf"/>
</dbReference>
<dbReference type="InterPro" id="IPR000194">
    <property type="entry name" value="ATPase_F1/V1/A1_a/bsu_nucl-bd"/>
</dbReference>
<dbReference type="InterPro" id="IPR024034">
    <property type="entry name" value="ATPase_F1/V1_b/a_C"/>
</dbReference>
<dbReference type="InterPro" id="IPR027417">
    <property type="entry name" value="P-loop_NTPase"/>
</dbReference>
<dbReference type="NCBIfam" id="TIGR01039">
    <property type="entry name" value="atpD"/>
    <property type="match status" value="1"/>
</dbReference>
<dbReference type="PANTHER" id="PTHR15184">
    <property type="entry name" value="ATP SYNTHASE"/>
    <property type="match status" value="1"/>
</dbReference>
<dbReference type="PANTHER" id="PTHR15184:SF71">
    <property type="entry name" value="ATP SYNTHASE SUBUNIT BETA, MITOCHONDRIAL"/>
    <property type="match status" value="1"/>
</dbReference>
<dbReference type="Pfam" id="PF00006">
    <property type="entry name" value="ATP-synt_ab"/>
    <property type="match status" value="1"/>
</dbReference>
<dbReference type="Pfam" id="PF02874">
    <property type="entry name" value="ATP-synt_ab_N"/>
    <property type="match status" value="1"/>
</dbReference>
<dbReference type="Pfam" id="PF22919">
    <property type="entry name" value="ATP-synt_VA_C"/>
    <property type="match status" value="1"/>
</dbReference>
<dbReference type="SMART" id="SM00382">
    <property type="entry name" value="AAA"/>
    <property type="match status" value="1"/>
</dbReference>
<dbReference type="SUPFAM" id="SSF47917">
    <property type="entry name" value="C-terminal domain of alpha and beta subunits of F1 ATP synthase"/>
    <property type="match status" value="1"/>
</dbReference>
<dbReference type="SUPFAM" id="SSF50615">
    <property type="entry name" value="N-terminal domain of alpha and beta subunits of F1 ATP synthase"/>
    <property type="match status" value="1"/>
</dbReference>
<dbReference type="SUPFAM" id="SSF52540">
    <property type="entry name" value="P-loop containing nucleoside triphosphate hydrolases"/>
    <property type="match status" value="1"/>
</dbReference>
<dbReference type="PROSITE" id="PS00152">
    <property type="entry name" value="ATPASE_ALPHA_BETA"/>
    <property type="match status" value="1"/>
</dbReference>
<keyword id="KW-0066">ATP synthesis</keyword>
<keyword id="KW-0067">ATP-binding</keyword>
<keyword id="KW-1003">Cell membrane</keyword>
<keyword id="KW-0139">CF(1)</keyword>
<keyword id="KW-0375">Hydrogen ion transport</keyword>
<keyword id="KW-0406">Ion transport</keyword>
<keyword id="KW-0472">Membrane</keyword>
<keyword id="KW-0547">Nucleotide-binding</keyword>
<keyword id="KW-1278">Translocase</keyword>
<keyword id="KW-0813">Transport</keyword>
<reference key="1">
    <citation type="submission" date="2007-06" db="EMBL/GenBank/DDBJ databases">
        <authorList>
            <person name="Brinkac L.M."/>
            <person name="Daugherty S."/>
            <person name="Dodson R.J."/>
            <person name="Madupu R."/>
            <person name="Brown J.L."/>
            <person name="Bruce D."/>
            <person name="Detter C."/>
            <person name="Munk C."/>
            <person name="Smith L.A."/>
            <person name="Smith T.J."/>
            <person name="White O."/>
            <person name="Brettin T.S."/>
        </authorList>
    </citation>
    <scope>NUCLEOTIDE SEQUENCE [LARGE SCALE GENOMIC DNA]</scope>
    <source>
        <strain>Langeland / NCTC 10281 / Type F</strain>
    </source>
</reference>
<evidence type="ECO:0000255" key="1">
    <source>
        <dbReference type="HAMAP-Rule" id="MF_01347"/>
    </source>
</evidence>
<name>ATPB_CLOBL</name>
<sequence length="463" mass="50759">MSNLGKVIQIIGPIIDIKFDSENLPDLFNALEINAGDRKVIAEVEQHIGDDTIRAIAMEDTEGLKRGMEALDTGKSVSVPVGKEVLGRLFNVLGKPIDGAGEFTSEESYPIHRPAPSFEEQSVEPEIFETGIKVIDLLAPYQKGGKIGLFGGAGVGKTVLIQELINNIAKEHGGLSVFTGVGERTREGNDLYYEMKESGVLEKTALVFGQMNEPPGARMRVALTGLTMSEYFRDQGQDVLLFIDNIFRFTQAGSEVSALLGRIPSAVGYQPTLATEMGALQERITSTKNGSITSVQAVYVPADDLTDPAPATTFAHLDATTVLSRAITELGIYPAVDPLESSSRMLDPRIIGEEHYEVAIKVKNILERYRELQDIIAILGIDELSEEDKLVVGRARKIQRFLSQPFTVAEQFTGMQGKYVPIKETVRGFKEILEGKHDNIPESAFLFQGTIEDVLKKAQQMEI</sequence>
<protein>
    <recommendedName>
        <fullName evidence="1">ATP synthase subunit beta</fullName>
        <ecNumber evidence="1">7.1.2.2</ecNumber>
    </recommendedName>
    <alternativeName>
        <fullName evidence="1">ATP synthase F1 sector subunit beta</fullName>
    </alternativeName>
    <alternativeName>
        <fullName evidence="1">F-ATPase subunit beta</fullName>
    </alternativeName>
</protein>
<accession>A7G9Q9</accession>
<feature type="chain" id="PRO_0000339518" description="ATP synthase subunit beta">
    <location>
        <begin position="1"/>
        <end position="463"/>
    </location>
</feature>
<feature type="binding site" evidence="1">
    <location>
        <begin position="151"/>
        <end position="158"/>
    </location>
    <ligand>
        <name>ATP</name>
        <dbReference type="ChEBI" id="CHEBI:30616"/>
    </ligand>
</feature>
<proteinExistence type="inferred from homology"/>
<organism>
    <name type="scientific">Clostridium botulinum (strain Langeland / NCTC 10281 / Type F)</name>
    <dbReference type="NCBI Taxonomy" id="441772"/>
    <lineage>
        <taxon>Bacteria</taxon>
        <taxon>Bacillati</taxon>
        <taxon>Bacillota</taxon>
        <taxon>Clostridia</taxon>
        <taxon>Eubacteriales</taxon>
        <taxon>Clostridiaceae</taxon>
        <taxon>Clostridium</taxon>
    </lineage>
</organism>
<comment type="function">
    <text evidence="1">Produces ATP from ADP in the presence of a proton gradient across the membrane. The catalytic sites are hosted primarily by the beta subunits.</text>
</comment>
<comment type="catalytic activity">
    <reaction evidence="1">
        <text>ATP + H2O + 4 H(+)(in) = ADP + phosphate + 5 H(+)(out)</text>
        <dbReference type="Rhea" id="RHEA:57720"/>
        <dbReference type="ChEBI" id="CHEBI:15377"/>
        <dbReference type="ChEBI" id="CHEBI:15378"/>
        <dbReference type="ChEBI" id="CHEBI:30616"/>
        <dbReference type="ChEBI" id="CHEBI:43474"/>
        <dbReference type="ChEBI" id="CHEBI:456216"/>
        <dbReference type="EC" id="7.1.2.2"/>
    </reaction>
</comment>
<comment type="subunit">
    <text evidence="1">F-type ATPases have 2 components, CF(1) - the catalytic core - and CF(0) - the membrane proton channel. CF(1) has five subunits: alpha(3), beta(3), gamma(1), delta(1), epsilon(1). CF(0) has three main subunits: a(1), b(2) and c(9-12). The alpha and beta chains form an alternating ring which encloses part of the gamma chain. CF(1) is attached to CF(0) by a central stalk formed by the gamma and epsilon chains, while a peripheral stalk is formed by the delta and b chains.</text>
</comment>
<comment type="subcellular location">
    <subcellularLocation>
        <location evidence="1">Cell membrane</location>
        <topology evidence="1">Peripheral membrane protein</topology>
    </subcellularLocation>
</comment>
<comment type="similarity">
    <text evidence="1">Belongs to the ATPase alpha/beta chains family.</text>
</comment>